<name>RECX_STAA3</name>
<feature type="chain" id="PRO_1000065208" description="Regulatory protein RecX">
    <location>
        <begin position="1"/>
        <end position="272"/>
    </location>
</feature>
<comment type="function">
    <text evidence="1">Modulates RecA activity.</text>
</comment>
<comment type="subcellular location">
    <subcellularLocation>
        <location evidence="1">Cytoplasm</location>
    </subcellularLocation>
</comment>
<comment type="similarity">
    <text evidence="1">Belongs to the RecX family.</text>
</comment>
<protein>
    <recommendedName>
        <fullName evidence="1">Regulatory protein RecX</fullName>
    </recommendedName>
</protein>
<accession>Q2FFM2</accession>
<organism>
    <name type="scientific">Staphylococcus aureus (strain USA300)</name>
    <dbReference type="NCBI Taxonomy" id="367830"/>
    <lineage>
        <taxon>Bacteria</taxon>
        <taxon>Bacillati</taxon>
        <taxon>Bacillota</taxon>
        <taxon>Bacilli</taxon>
        <taxon>Bacillales</taxon>
        <taxon>Staphylococcaceae</taxon>
        <taxon>Staphylococcus</taxon>
    </lineage>
</organism>
<evidence type="ECO:0000255" key="1">
    <source>
        <dbReference type="HAMAP-Rule" id="MF_01114"/>
    </source>
</evidence>
<sequence>MPKITKIEVQKKNKERFNLFLDEQFEMGIDIDTLVKFNLKKGQQLEAADMAEIQKYDHYRIGLNKAIQYLSYKKRTEKEVIQYLQKEEISEQAISEVIEYCYREKLIDHQDYAESLKNTMIRTTDKGPKIYQQKLYQLGIEPNIIEIFTELYREQQELDDIIQIAEKISKTKKGPQNKVKEKVMQSLIQKGFEMETIHAVLNEMDFTQDEAVLDDLLQRDLEKIYNKNRKKYTQQKLISKTIEGLMRKGYKYDKIKAKLEESGIADGTEEIE</sequence>
<keyword id="KW-0963">Cytoplasm</keyword>
<reference key="1">
    <citation type="journal article" date="2006" name="Lancet">
        <title>Complete genome sequence of USA300, an epidemic clone of community-acquired meticillin-resistant Staphylococcus aureus.</title>
        <authorList>
            <person name="Diep B.A."/>
            <person name="Gill S.R."/>
            <person name="Chang R.F."/>
            <person name="Phan T.H."/>
            <person name="Chen J.H."/>
            <person name="Davidson M.G."/>
            <person name="Lin F."/>
            <person name="Lin J."/>
            <person name="Carleton H.A."/>
            <person name="Mongodin E.F."/>
            <person name="Sensabaugh G.F."/>
            <person name="Perdreau-Remington F."/>
        </authorList>
    </citation>
    <scope>NUCLEOTIDE SEQUENCE [LARGE SCALE GENOMIC DNA]</scope>
    <source>
        <strain>USA300</strain>
    </source>
</reference>
<dbReference type="EMBL" id="CP000255">
    <property type="protein sequence ID" value="ABD21031.1"/>
    <property type="molecule type" value="Genomic_DNA"/>
</dbReference>
<dbReference type="RefSeq" id="WP_001124419.1">
    <property type="nucleotide sequence ID" value="NZ_CP027476.1"/>
</dbReference>
<dbReference type="SMR" id="Q2FFM2"/>
<dbReference type="KEGG" id="saa:SAUSA300_1854"/>
<dbReference type="HOGENOM" id="CLU_066607_4_0_9"/>
<dbReference type="OMA" id="RGRYNIF"/>
<dbReference type="Proteomes" id="UP000001939">
    <property type="component" value="Chromosome"/>
</dbReference>
<dbReference type="GO" id="GO:0005737">
    <property type="term" value="C:cytoplasm"/>
    <property type="evidence" value="ECO:0007669"/>
    <property type="project" value="UniProtKB-SubCell"/>
</dbReference>
<dbReference type="GO" id="GO:0006282">
    <property type="term" value="P:regulation of DNA repair"/>
    <property type="evidence" value="ECO:0007669"/>
    <property type="project" value="UniProtKB-UniRule"/>
</dbReference>
<dbReference type="Gene3D" id="1.10.10.10">
    <property type="entry name" value="Winged helix-like DNA-binding domain superfamily/Winged helix DNA-binding domain"/>
    <property type="match status" value="4"/>
</dbReference>
<dbReference type="HAMAP" id="MF_01114">
    <property type="entry name" value="RecX"/>
    <property type="match status" value="1"/>
</dbReference>
<dbReference type="InterPro" id="IPR053926">
    <property type="entry name" value="RecX_HTH_1st"/>
</dbReference>
<dbReference type="InterPro" id="IPR053925">
    <property type="entry name" value="RecX_HTH_3rd"/>
</dbReference>
<dbReference type="InterPro" id="IPR003783">
    <property type="entry name" value="Regulatory_RecX"/>
</dbReference>
<dbReference type="InterPro" id="IPR036388">
    <property type="entry name" value="WH-like_DNA-bd_sf"/>
</dbReference>
<dbReference type="NCBIfam" id="NF010733">
    <property type="entry name" value="PRK14135.1"/>
    <property type="match status" value="1"/>
</dbReference>
<dbReference type="PANTHER" id="PTHR33602">
    <property type="entry name" value="REGULATORY PROTEIN RECX FAMILY PROTEIN"/>
    <property type="match status" value="1"/>
</dbReference>
<dbReference type="PANTHER" id="PTHR33602:SF1">
    <property type="entry name" value="REGULATORY PROTEIN RECX FAMILY PROTEIN"/>
    <property type="match status" value="1"/>
</dbReference>
<dbReference type="Pfam" id="PF21982">
    <property type="entry name" value="RecX_HTH1"/>
    <property type="match status" value="1"/>
</dbReference>
<dbReference type="Pfam" id="PF21981">
    <property type="entry name" value="RecX_HTH3"/>
    <property type="match status" value="1"/>
</dbReference>
<gene>
    <name evidence="1" type="primary">recX</name>
    <name type="ordered locus">SAUSA300_1854</name>
</gene>
<proteinExistence type="inferred from homology"/>